<dbReference type="EC" id="1.7.99.1" evidence="1"/>
<dbReference type="EMBL" id="Z11975">
    <property type="protein sequence ID" value="CAA78029.1"/>
    <property type="molecule type" value="Genomic_DNA"/>
</dbReference>
<dbReference type="EMBL" id="CP001358">
    <property type="protein sequence ID" value="ACL49726.1"/>
    <property type="molecule type" value="Genomic_DNA"/>
</dbReference>
<dbReference type="PIR" id="S24389">
    <property type="entry name" value="S24389"/>
</dbReference>
<dbReference type="PDB" id="1GN9">
    <property type="method" value="X-ray"/>
    <property type="resolution" value="2.60 A"/>
    <property type="chains" value="A/B=2-545"/>
</dbReference>
<dbReference type="PDB" id="1GNL">
    <property type="method" value="X-ray"/>
    <property type="resolution" value="1.25 A"/>
    <property type="chains" value="A/B=2-545"/>
</dbReference>
<dbReference type="PDB" id="1OA0">
    <property type="method" value="X-ray"/>
    <property type="resolution" value="1.25 A"/>
    <property type="chains" value="A/B=2-545"/>
</dbReference>
<dbReference type="PDB" id="1UPX">
    <property type="method" value="X-ray"/>
    <property type="resolution" value="1.25 A"/>
    <property type="chains" value="A/B=2-545"/>
</dbReference>
<dbReference type="PDBsum" id="1GN9"/>
<dbReference type="PDBsum" id="1GNL"/>
<dbReference type="PDBsum" id="1OA0"/>
<dbReference type="PDBsum" id="1UPX"/>
<dbReference type="SMR" id="Q01770"/>
<dbReference type="STRING" id="525146.Ddes_1829"/>
<dbReference type="DrugBank" id="DB03814">
    <property type="generic name" value="2-(N-morpholino)ethanesulfonic acid"/>
</dbReference>
<dbReference type="DrugBank" id="DB02761">
    <property type="generic name" value="S-Mercaptocysteine"/>
</dbReference>
<dbReference type="KEGG" id="dds:Ddes_1829"/>
<dbReference type="eggNOG" id="COG1151">
    <property type="taxonomic scope" value="Bacteria"/>
</dbReference>
<dbReference type="HOGENOM" id="CLU_038344_2_0_7"/>
<dbReference type="EvolutionaryTrace" id="Q01770"/>
<dbReference type="GO" id="GO:0005737">
    <property type="term" value="C:cytoplasm"/>
    <property type="evidence" value="ECO:0007669"/>
    <property type="project" value="UniProtKB-SubCell"/>
</dbReference>
<dbReference type="GO" id="GO:0051539">
    <property type="term" value="F:4 iron, 4 sulfur cluster binding"/>
    <property type="evidence" value="ECO:0007669"/>
    <property type="project" value="UniProtKB-KW"/>
</dbReference>
<dbReference type="GO" id="GO:0050418">
    <property type="term" value="F:hydroxylamine reductase activity"/>
    <property type="evidence" value="ECO:0007669"/>
    <property type="project" value="UniProtKB-UniRule"/>
</dbReference>
<dbReference type="GO" id="GO:0046872">
    <property type="term" value="F:metal ion binding"/>
    <property type="evidence" value="ECO:0007669"/>
    <property type="project" value="UniProtKB-KW"/>
</dbReference>
<dbReference type="GO" id="GO:0004601">
    <property type="term" value="F:peroxidase activity"/>
    <property type="evidence" value="ECO:0007669"/>
    <property type="project" value="TreeGrafter"/>
</dbReference>
<dbReference type="GO" id="GO:0042542">
    <property type="term" value="P:response to hydrogen peroxide"/>
    <property type="evidence" value="ECO:0007669"/>
    <property type="project" value="TreeGrafter"/>
</dbReference>
<dbReference type="CDD" id="cd01914">
    <property type="entry name" value="HCP"/>
    <property type="match status" value="1"/>
</dbReference>
<dbReference type="FunFam" id="1.20.1270.20:FF:000001">
    <property type="entry name" value="Hydroxylamine reductase"/>
    <property type="match status" value="1"/>
</dbReference>
<dbReference type="FunFam" id="3.40.50.2030:FF:000001">
    <property type="entry name" value="Hydroxylamine reductase"/>
    <property type="match status" value="1"/>
</dbReference>
<dbReference type="FunFam" id="3.40.50.2030:FF:000002">
    <property type="entry name" value="Hydroxylamine reductase"/>
    <property type="match status" value="1"/>
</dbReference>
<dbReference type="Gene3D" id="1.20.1270.20">
    <property type="match status" value="2"/>
</dbReference>
<dbReference type="Gene3D" id="3.40.50.2030">
    <property type="match status" value="2"/>
</dbReference>
<dbReference type="HAMAP" id="MF_00069">
    <property type="entry name" value="Hydroxylam_reduct"/>
    <property type="match status" value="1"/>
</dbReference>
<dbReference type="InterPro" id="IPR004137">
    <property type="entry name" value="HCP/CODH"/>
</dbReference>
<dbReference type="InterPro" id="IPR010048">
    <property type="entry name" value="Hydroxylam_reduct"/>
</dbReference>
<dbReference type="InterPro" id="IPR016099">
    <property type="entry name" value="Prismane-like_a/b-sand"/>
</dbReference>
<dbReference type="InterPro" id="IPR011254">
    <property type="entry name" value="Prismane-like_sf"/>
</dbReference>
<dbReference type="InterPro" id="IPR016100">
    <property type="entry name" value="Prismane_a-bundle"/>
</dbReference>
<dbReference type="NCBIfam" id="TIGR01703">
    <property type="entry name" value="hybrid_clust"/>
    <property type="match status" value="1"/>
</dbReference>
<dbReference type="NCBIfam" id="NF003658">
    <property type="entry name" value="PRK05290.1"/>
    <property type="match status" value="1"/>
</dbReference>
<dbReference type="PANTHER" id="PTHR30109">
    <property type="entry name" value="HYDROXYLAMINE REDUCTASE"/>
    <property type="match status" value="1"/>
</dbReference>
<dbReference type="PANTHER" id="PTHR30109:SF0">
    <property type="entry name" value="HYDROXYLAMINE REDUCTASE"/>
    <property type="match status" value="1"/>
</dbReference>
<dbReference type="Pfam" id="PF03063">
    <property type="entry name" value="Prismane"/>
    <property type="match status" value="1"/>
</dbReference>
<dbReference type="PIRSF" id="PIRSF000076">
    <property type="entry name" value="HCP"/>
    <property type="match status" value="1"/>
</dbReference>
<dbReference type="SUPFAM" id="SSF56821">
    <property type="entry name" value="Prismane protein-like"/>
    <property type="match status" value="1"/>
</dbReference>
<sequence>MSNAMFCYQCQETVGNKGCTQVGVCGKKPETAALQDALIYVTKGLGQIATRLRAEGKAVDHRIDRLVTGNLFATITNANFDDDILAERVRMTCAAKKELAASLTDKSGLSDAALWEASEKSAMLAKAGTVGVMATTDDDVRSLRWLITFGLKGMAAYAKHADVLGKHENSLDAFMQEALAKTLDDSLSVADLVALTLETGKFGVSAMALLDAANTGTYGHPEITKVNIGVGSNPGILISGHDLRDLEMLLKQTEGTGVDVYTHSEMLPAHYYPAFKKYAHFKGNYGNAWWKQKEEFESFNGPVLLTTNCLVPPKDSYKDRVYTTGIVGFTGCKHIPGEIGEHKDFSAIIAHAKTCPAPTEIESGEIIGGFAHNQVLALADKVIDAVKSGAIKKFVVMAGCDGRAKSRSYYTDFAEGLPKDTVILTAGCAKYRYNKLNLGDIGGIPRVLDAGQCNDSYSLAVIALKLKEVFGLEDVNDLPIVYNIAWYEQKAVIVLLALLSLGVKNIHLGPTLPAFLSPNVAKVLVEQFNIGGITSPQDDLKAFFG</sequence>
<organism>
    <name type="scientific">Desulfovibrio desulfuricans (strain ATCC 27774 / DSM 6949 / MB)</name>
    <dbReference type="NCBI Taxonomy" id="525146"/>
    <lineage>
        <taxon>Bacteria</taxon>
        <taxon>Pseudomonadati</taxon>
        <taxon>Thermodesulfobacteriota</taxon>
        <taxon>Desulfovibrionia</taxon>
        <taxon>Desulfovibrionales</taxon>
        <taxon>Desulfovibrionaceae</taxon>
        <taxon>Desulfovibrio</taxon>
    </lineage>
</organism>
<accession>Q01770</accession>
<accession>B8J267</accession>
<keyword id="KW-0002">3D-structure</keyword>
<keyword id="KW-0004">4Fe-4S</keyword>
<keyword id="KW-0963">Cytoplasm</keyword>
<keyword id="KW-0903">Direct protein sequencing</keyword>
<keyword id="KW-0408">Iron</keyword>
<keyword id="KW-0411">Iron-sulfur</keyword>
<keyword id="KW-0479">Metal-binding</keyword>
<keyword id="KW-0560">Oxidoreductase</keyword>
<proteinExistence type="evidence at protein level"/>
<gene>
    <name evidence="1" type="primary">hcp</name>
    <name type="ordered locus">Ddes_1829</name>
</gene>
<protein>
    <recommendedName>
        <fullName evidence="1">Hydroxylamine reductase</fullName>
        <ecNumber evidence="1">1.7.99.1</ecNumber>
    </recommendedName>
    <alternativeName>
        <fullName evidence="1">Hybrid-cluster protein</fullName>
        <shortName evidence="1">HCP</shortName>
    </alternativeName>
    <alternativeName>
        <fullName evidence="1">Prismane protein</fullName>
    </alternativeName>
</protein>
<reference key="1">
    <citation type="journal article" date="1992" name="Biochim. Biophys. Acta">
        <title>The primary structure of a protein containing a putative [6Fe-6S] prismane cluster from Desulfovibrio desulfuricans (ATCC 27774).</title>
        <authorList>
            <person name="Stokkermans J.P.W.G."/>
            <person name="van den Berg W.A.M."/>
            <person name="van Dongen W.M.A.M."/>
            <person name="Veeger C."/>
        </authorList>
    </citation>
    <scope>NUCLEOTIDE SEQUENCE [GENOMIC DNA]</scope>
</reference>
<reference key="2">
    <citation type="submission" date="2009-01" db="EMBL/GenBank/DDBJ databases">
        <title>Complete sequence of Desulfovibrio desulfuricans subsp. desulfuricans str. ATCC 27774.</title>
        <authorList>
            <consortium name="US DOE Joint Genome Institute"/>
            <person name="Lucas S."/>
            <person name="Copeland A."/>
            <person name="Lapidus A."/>
            <person name="Glavina del Rio T."/>
            <person name="Tice H."/>
            <person name="Bruce D."/>
            <person name="Goodwin L."/>
            <person name="Pitluck S."/>
            <person name="Sims D."/>
            <person name="Lu M."/>
            <person name="Kiss H."/>
            <person name="Meineke L."/>
            <person name="Brettin T."/>
            <person name="Detter J.C."/>
            <person name="Han C."/>
            <person name="Larimer F."/>
            <person name="Land M."/>
            <person name="Hauser L."/>
            <person name="Kyrpides N."/>
            <person name="Ovchinnikova G."/>
            <person name="Hazen T.C."/>
        </authorList>
    </citation>
    <scope>NUCLEOTIDE SEQUENCE [LARGE SCALE GENOMIC DNA]</scope>
    <source>
        <strain>ATCC 27774 / DSM 6949 / MB</strain>
    </source>
</reference>
<reference key="3">
    <citation type="journal article" date="1992" name="J. Biol. Chem.">
        <title>Direct spectroscopic evidence for the presence of a 6Fe cluster in an iron-sulfur protein isolated from Desulfovibrio desulfuricans (ATCC 27774).</title>
        <authorList>
            <person name="Moura I."/>
            <person name="Tavares P."/>
            <person name="Moura J.J.G."/>
            <person name="Ravi N."/>
            <person name="Huynh B.H."/>
            <person name="Liu M.Y."/>
            <person name="le Gall J."/>
        </authorList>
    </citation>
    <scope>PROTEIN SEQUENCE OF 2-37</scope>
    <scope>COFACTOR</scope>
    <scope>SUBUNIT</scope>
    <source>
        <strain>ATCC 27774 / DSM 6949 / MB</strain>
    </source>
</reference>
<reference key="4">
    <citation type="journal article" date="2002" name="J. Biol. Inorg. Chem.">
        <title>Hybrid cluster proteins (HCPs) from Desulfovibrio desulfuricans ATCC 27774 and Desulfovibrio vulgaris (Hildenborough): X-ray structures at 1.25 A resolution using synchrotron radiation.</title>
        <authorList>
            <person name="Macedo S."/>
            <person name="Mitchell E.P."/>
            <person name="Romao C.V."/>
            <person name="Cooper S.J."/>
            <person name="Coelho R."/>
            <person name="Liu M.Y."/>
            <person name="Xavier A.V."/>
            <person name="LeGall J."/>
            <person name="Bailey S."/>
            <person name="Garner C.D."/>
            <person name="Hagen W.R."/>
            <person name="Teixeira M."/>
            <person name="Carrondo M.A."/>
            <person name="Lindley P."/>
        </authorList>
    </citation>
    <scope>X-RAY CRYSTALLOGRAPHY (1.25 ANGSTROMS) OF 2-545 IN COMPLEX WITH IRON-SULFUR CLUSTER AND IRON-SULFUR-OXYGEN CLUSTER</scope>
    <scope>COFACTOR</scope>
    <scope>SULFHYDRATION AT CYS-400</scope>
    <scope>SUBUNIT</scope>
    <source>
        <strain>ATCC 27774 / DSM 6949 / MB</strain>
    </source>
</reference>
<reference key="5">
    <citation type="journal article" date="2003" name="Acta Crystallogr. D">
        <title>Structure of the hybrid cluster protein (HCP) from Desulfovibrio desulfuricans ATCC 27774 containing molecules in the oxidized and reduced states.</title>
        <authorList>
            <person name="Macedo S."/>
            <person name="Aragao D."/>
            <person name="Mitchell E.P."/>
            <person name="Lindley P."/>
        </authorList>
    </citation>
    <scope>X-RAY CRYSTALLOGRAPHY (1.25 ANGSTROMS) OF 2-545 IN COMPLEX WITH IRON-SULFUR CLUSTER AND IRON-SULFUR-OXYGEN CLUSTER</scope>
    <scope>COFACTOR</scope>
    <source>
        <strain>ATCC 27774 / DSM 6949 / MB</strain>
    </source>
</reference>
<reference key="6">
    <citation type="journal article" date="2003" name="J. Biol. Inorg. Chem.">
        <title>Reduced hybrid cluster proteins (HCP) from Desulfovibrio desulfuricans ATCC 27774 and Desulfovibrio vulgaris (Hildenborough): X-ray structures at high resolution using synchrotron radiation.</title>
        <authorList>
            <person name="Aragao D."/>
            <person name="Macedo S."/>
            <person name="Mitchell E.P."/>
            <person name="Romao C.V."/>
            <person name="Liu M.Y."/>
            <person name="Frazao C."/>
            <person name="Saraiva L.M."/>
            <person name="Xavier A.V."/>
            <person name="LeGall J."/>
            <person name="van Dongen W.M.A.M."/>
            <person name="Hagen W.R."/>
            <person name="Teixeira M."/>
            <person name="Carrondo M.A."/>
            <person name="Lindley P."/>
        </authorList>
    </citation>
    <scope>X-RAY CRYSTALLOGRAPHY (1.25 ANGSTROMS) OF 2-545 IN COMPLEX WITH IRON-SULFUR CLUSTER AND IRON-SULFUR-OXYGEN CLUSTER</scope>
    <scope>COFACTOR</scope>
    <scope>SUBUNIT</scope>
    <source>
        <strain>ATCC 27774 / DSM 6949 / MB</strain>
    </source>
</reference>
<evidence type="ECO:0000255" key="1">
    <source>
        <dbReference type="HAMAP-Rule" id="MF_00069"/>
    </source>
</evidence>
<evidence type="ECO:0000269" key="2">
    <source>
    </source>
</evidence>
<evidence type="ECO:0000269" key="3">
    <source>
    </source>
</evidence>
<evidence type="ECO:0000269" key="4">
    <source>
    </source>
</evidence>
<evidence type="ECO:0000269" key="5">
    <source>
    </source>
</evidence>
<evidence type="ECO:0000305" key="6">
    <source>
    </source>
</evidence>
<evidence type="ECO:0007829" key="7">
    <source>
        <dbReference type="PDB" id="1GNL"/>
    </source>
</evidence>
<evidence type="ECO:0007829" key="8">
    <source>
        <dbReference type="PDB" id="1OA0"/>
    </source>
</evidence>
<name>HCP_DESDA</name>
<comment type="function">
    <text evidence="1">Catalyzes the reduction of hydroxylamine to form NH(3) and H(2)O.</text>
</comment>
<comment type="catalytic activity">
    <reaction evidence="1">
        <text>A + NH4(+) + H2O = hydroxylamine + AH2 + H(+)</text>
        <dbReference type="Rhea" id="RHEA:22052"/>
        <dbReference type="ChEBI" id="CHEBI:13193"/>
        <dbReference type="ChEBI" id="CHEBI:15377"/>
        <dbReference type="ChEBI" id="CHEBI:15378"/>
        <dbReference type="ChEBI" id="CHEBI:15429"/>
        <dbReference type="ChEBI" id="CHEBI:17499"/>
        <dbReference type="ChEBI" id="CHEBI:28938"/>
        <dbReference type="EC" id="1.7.99.1"/>
    </reaction>
</comment>
<comment type="cofactor">
    <cofactor evidence="2 3 4 5">
        <name>[4Fe-4S] cluster</name>
        <dbReference type="ChEBI" id="CHEBI:49883"/>
    </cofactor>
    <text evidence="2 3 4 5">Binds 1 spin-admixed [4Fe-4S] cluster.</text>
</comment>
<comment type="cofactor">
    <cofactor evidence="2 3 5">
        <name>hybrid [4Fe-2O-2S] cluster</name>
        <dbReference type="ChEBI" id="CHEBI:60519"/>
    </cofactor>
    <text evidence="2 3 5">Binds 1 hybrid [4Fe-2O-2S] cluster.</text>
</comment>
<comment type="subunit">
    <text evidence="2 3 4">Monomer.</text>
</comment>
<comment type="subcellular location">
    <subcellularLocation>
        <location evidence="1">Cytoplasm</location>
    </subcellularLocation>
</comment>
<comment type="similarity">
    <text evidence="1">Belongs to the HCP family.</text>
</comment>
<comment type="caution">
    <text evidence="6">Was originally thought to contain a 6Fe-6S cluster as indicated.</text>
</comment>
<feature type="initiator methionine" description="Removed" evidence="4">
    <location>
        <position position="1"/>
    </location>
</feature>
<feature type="chain" id="PRO_0000151666" description="Hydroxylamine reductase">
    <location>
        <begin position="2"/>
        <end position="545"/>
    </location>
</feature>
<feature type="binding site" evidence="2 3 5">
    <location>
        <position position="7"/>
    </location>
    <ligand>
        <name>[4Fe-4S] cluster</name>
        <dbReference type="ChEBI" id="CHEBI:49883"/>
    </ligand>
</feature>
<feature type="binding site" evidence="2 3 5">
    <location>
        <position position="10"/>
    </location>
    <ligand>
        <name>[4Fe-4S] cluster</name>
        <dbReference type="ChEBI" id="CHEBI:49883"/>
    </ligand>
</feature>
<feature type="binding site" evidence="2 3 5">
    <location>
        <position position="19"/>
    </location>
    <ligand>
        <name>[4Fe-4S] cluster</name>
        <dbReference type="ChEBI" id="CHEBI:49883"/>
    </ligand>
</feature>
<feature type="binding site" evidence="2 3 5">
    <location>
        <position position="25"/>
    </location>
    <ligand>
        <name>[4Fe-4S] cluster</name>
        <dbReference type="ChEBI" id="CHEBI:49883"/>
    </ligand>
</feature>
<feature type="binding site" evidence="2 3 5">
    <location>
        <position position="241"/>
    </location>
    <ligand>
        <name>hybrid [4Fe-2O-2S] cluster</name>
        <dbReference type="ChEBI" id="CHEBI:60519"/>
    </ligand>
</feature>
<feature type="binding site" evidence="2 3 5">
    <location>
        <position position="265"/>
    </location>
    <ligand>
        <name>hybrid [4Fe-2O-2S] cluster</name>
        <dbReference type="ChEBI" id="CHEBI:60519"/>
    </ligand>
</feature>
<feature type="binding site" evidence="2 3 5">
    <location>
        <position position="309"/>
    </location>
    <ligand>
        <name>hybrid [4Fe-2O-2S] cluster</name>
        <dbReference type="ChEBI" id="CHEBI:60519"/>
    </ligand>
</feature>
<feature type="binding site" description="via persulfide group" evidence="2 3">
    <location>
        <position position="400"/>
    </location>
    <ligand>
        <name>hybrid [4Fe-2O-2S] cluster</name>
        <dbReference type="ChEBI" id="CHEBI:60519"/>
    </ligand>
</feature>
<feature type="binding site" evidence="2 3 5">
    <location>
        <position position="428"/>
    </location>
    <ligand>
        <name>hybrid [4Fe-2O-2S] cluster</name>
        <dbReference type="ChEBI" id="CHEBI:60519"/>
    </ligand>
</feature>
<feature type="binding site" evidence="2 3 5">
    <location>
        <position position="453"/>
    </location>
    <ligand>
        <name>hybrid [4Fe-2O-2S] cluster</name>
        <dbReference type="ChEBI" id="CHEBI:60519"/>
    </ligand>
</feature>
<feature type="binding site" evidence="2 5">
    <location>
        <position position="488"/>
    </location>
    <ligand>
        <name>hybrid [4Fe-2O-2S] cluster</name>
        <dbReference type="ChEBI" id="CHEBI:60519"/>
    </ligand>
</feature>
<feature type="binding site" evidence="2 5">
    <location>
        <position position="490"/>
    </location>
    <ligand>
        <name>hybrid [4Fe-2O-2S] cluster</name>
        <dbReference type="ChEBI" id="CHEBI:60519"/>
    </ligand>
</feature>
<feature type="modified residue" description="Cysteine persulfide; in oxidized form" evidence="2">
    <location>
        <position position="400"/>
    </location>
</feature>
<feature type="helix" evidence="7">
    <location>
        <begin position="14"/>
        <end position="16"/>
    </location>
</feature>
<feature type="strand" evidence="8">
    <location>
        <begin position="19"/>
        <end position="22"/>
    </location>
</feature>
<feature type="helix" evidence="7">
    <location>
        <begin position="29"/>
        <end position="54"/>
    </location>
</feature>
<feature type="helix" evidence="7">
    <location>
        <begin position="61"/>
        <end position="73"/>
    </location>
</feature>
<feature type="turn" evidence="7">
    <location>
        <begin position="76"/>
        <end position="78"/>
    </location>
</feature>
<feature type="helix" evidence="7">
    <location>
        <begin position="82"/>
        <end position="101"/>
    </location>
</feature>
<feature type="helix" evidence="7">
    <location>
        <begin position="111"/>
        <end position="114"/>
    </location>
</feature>
<feature type="helix" evidence="7">
    <location>
        <begin position="120"/>
        <end position="127"/>
    </location>
</feature>
<feature type="turn" evidence="7">
    <location>
        <begin position="128"/>
        <end position="130"/>
    </location>
</feature>
<feature type="helix" evidence="7">
    <location>
        <begin position="132"/>
        <end position="134"/>
    </location>
</feature>
<feature type="helix" evidence="7">
    <location>
        <begin position="138"/>
        <end position="163"/>
    </location>
</feature>
<feature type="helix" evidence="7">
    <location>
        <begin position="169"/>
        <end position="181"/>
    </location>
</feature>
<feature type="helix" evidence="7">
    <location>
        <begin position="189"/>
        <end position="218"/>
    </location>
</feature>
<feature type="strand" evidence="7">
    <location>
        <begin position="224"/>
        <end position="227"/>
    </location>
</feature>
<feature type="strand" evidence="7">
    <location>
        <begin position="235"/>
        <end position="241"/>
    </location>
</feature>
<feature type="helix" evidence="7">
    <location>
        <begin position="243"/>
        <end position="253"/>
    </location>
</feature>
<feature type="turn" evidence="7">
    <location>
        <begin position="254"/>
        <end position="257"/>
    </location>
</feature>
<feature type="strand" evidence="7">
    <location>
        <begin position="259"/>
        <end position="262"/>
    </location>
</feature>
<feature type="helix" evidence="7">
    <location>
        <begin position="264"/>
        <end position="271"/>
    </location>
</feature>
<feature type="helix" evidence="7">
    <location>
        <begin position="273"/>
        <end position="277"/>
    </location>
</feature>
<feature type="strand" evidence="7">
    <location>
        <begin position="281"/>
        <end position="284"/>
    </location>
</feature>
<feature type="strand" evidence="7">
    <location>
        <begin position="286"/>
        <end position="288"/>
    </location>
</feature>
<feature type="helix" evidence="7">
    <location>
        <begin position="289"/>
        <end position="291"/>
    </location>
</feature>
<feature type="helix" evidence="7">
    <location>
        <begin position="292"/>
        <end position="299"/>
    </location>
</feature>
<feature type="strand" evidence="7">
    <location>
        <begin position="303"/>
        <end position="308"/>
    </location>
</feature>
<feature type="helix" evidence="7">
    <location>
        <begin position="315"/>
        <end position="318"/>
    </location>
</feature>
<feature type="strand" evidence="7">
    <location>
        <begin position="321"/>
        <end position="324"/>
    </location>
</feature>
<feature type="strand" evidence="7">
    <location>
        <begin position="332"/>
        <end position="335"/>
    </location>
</feature>
<feature type="strand" evidence="7">
    <location>
        <begin position="338"/>
        <end position="340"/>
    </location>
</feature>
<feature type="helix" evidence="7">
    <location>
        <begin position="346"/>
        <end position="353"/>
    </location>
</feature>
<feature type="strand" evidence="7">
    <location>
        <begin position="364"/>
        <end position="368"/>
    </location>
</feature>
<feature type="helix" evidence="7">
    <location>
        <begin position="372"/>
        <end position="377"/>
    </location>
</feature>
<feature type="helix" evidence="7">
    <location>
        <begin position="379"/>
        <end position="387"/>
    </location>
</feature>
<feature type="strand" evidence="7">
    <location>
        <begin position="393"/>
        <end position="396"/>
    </location>
</feature>
<feature type="helix" evidence="7">
    <location>
        <begin position="405"/>
        <end position="407"/>
    </location>
</feature>
<feature type="helix" evidence="7">
    <location>
        <begin position="408"/>
        <end position="416"/>
    </location>
</feature>
<feature type="strand" evidence="7">
    <location>
        <begin position="421"/>
        <end position="425"/>
    </location>
</feature>
<feature type="helix" evidence="7">
    <location>
        <begin position="428"/>
        <end position="432"/>
    </location>
</feature>
<feature type="turn" evidence="7">
    <location>
        <begin position="433"/>
        <end position="435"/>
    </location>
</feature>
<feature type="strand" evidence="7">
    <location>
        <begin position="444"/>
        <end position="449"/>
    </location>
</feature>
<feature type="helix" evidence="7">
    <location>
        <begin position="453"/>
        <end position="455"/>
    </location>
</feature>
<feature type="helix" evidence="7">
    <location>
        <begin position="456"/>
        <end position="469"/>
    </location>
</feature>
<feature type="helix" evidence="7">
    <location>
        <begin position="475"/>
        <end position="477"/>
    </location>
</feature>
<feature type="strand" evidence="7">
    <location>
        <begin position="478"/>
        <end position="485"/>
    </location>
</feature>
<feature type="helix" evidence="7">
    <location>
        <begin position="489"/>
        <end position="500"/>
    </location>
</feature>
<feature type="strand" evidence="7">
    <location>
        <begin position="507"/>
        <end position="511"/>
    </location>
</feature>
<feature type="helix" evidence="7">
    <location>
        <begin position="518"/>
        <end position="528"/>
    </location>
</feature>
<feature type="helix" evidence="7">
    <location>
        <begin position="536"/>
        <end position="542"/>
    </location>
</feature>